<accession>Q5U593</accession>
<protein>
    <recommendedName>
        <fullName>Serine/threonine/tyrosine-interacting protein B</fullName>
    </recommendedName>
    <alternativeName>
        <fullName evidence="3">Inactive tyrosine-protein phosphatase STYX-B</fullName>
    </alternativeName>
</protein>
<name>STYXB_XENLA</name>
<reference key="1">
    <citation type="submission" date="2004-10" db="EMBL/GenBank/DDBJ databases">
        <authorList>
            <consortium name="NIH - Xenopus Gene Collection (XGC) project"/>
        </authorList>
    </citation>
    <scope>NUCLEOTIDE SEQUENCE [LARGE SCALE MRNA]</scope>
    <source>
        <tissue>Eye</tissue>
    </source>
</reference>
<gene>
    <name type="primary">styx-b</name>
</gene>
<keyword id="KW-1185">Reference proteome</keyword>
<dbReference type="EMBL" id="BC084791">
    <property type="protein sequence ID" value="AAH84791.1"/>
    <property type="molecule type" value="mRNA"/>
</dbReference>
<dbReference type="RefSeq" id="NP_001088464.1">
    <property type="nucleotide sequence ID" value="NM_001094995.1"/>
</dbReference>
<dbReference type="SMR" id="Q5U593"/>
<dbReference type="DNASU" id="495329"/>
<dbReference type="GeneID" id="495329"/>
<dbReference type="KEGG" id="xla:495329"/>
<dbReference type="AGR" id="Xenbase:XB-GENE-6253970"/>
<dbReference type="CTD" id="495329"/>
<dbReference type="Xenbase" id="XB-GENE-6253970">
    <property type="gene designation" value="styx.S"/>
</dbReference>
<dbReference type="OrthoDB" id="426001at2759"/>
<dbReference type="Proteomes" id="UP000186698">
    <property type="component" value="Chromosome 8S"/>
</dbReference>
<dbReference type="Bgee" id="495329">
    <property type="expression patterns" value="Expressed in blastula and 19 other cell types or tissues"/>
</dbReference>
<dbReference type="GO" id="GO:0005737">
    <property type="term" value="C:cytoplasm"/>
    <property type="evidence" value="ECO:0000318"/>
    <property type="project" value="GO_Central"/>
</dbReference>
<dbReference type="GO" id="GO:0005654">
    <property type="term" value="C:nucleoplasm"/>
    <property type="evidence" value="ECO:0000318"/>
    <property type="project" value="GO_Central"/>
</dbReference>
<dbReference type="GO" id="GO:1990444">
    <property type="term" value="F:F-box domain binding"/>
    <property type="evidence" value="ECO:0007669"/>
    <property type="project" value="TreeGrafter"/>
</dbReference>
<dbReference type="GO" id="GO:0062026">
    <property type="term" value="P:negative regulation of SCF-dependent proteasomal ubiquitin-dependent catabolic process"/>
    <property type="evidence" value="ECO:0000318"/>
    <property type="project" value="GO_Central"/>
</dbReference>
<dbReference type="GO" id="GO:0070372">
    <property type="term" value="P:regulation of ERK1 and ERK2 cascade"/>
    <property type="evidence" value="ECO:0000318"/>
    <property type="project" value="GO_Central"/>
</dbReference>
<dbReference type="CDD" id="cd14522">
    <property type="entry name" value="DSP_STYX"/>
    <property type="match status" value="1"/>
</dbReference>
<dbReference type="FunFam" id="3.90.190.10:FF:000036">
    <property type="entry name" value="Serine/threonine/tyrosine-interacting protein a"/>
    <property type="match status" value="1"/>
</dbReference>
<dbReference type="Gene3D" id="3.90.190.10">
    <property type="entry name" value="Protein tyrosine phosphatase superfamily"/>
    <property type="match status" value="1"/>
</dbReference>
<dbReference type="InterPro" id="IPR000340">
    <property type="entry name" value="Dual-sp_phosphatase_cat-dom"/>
</dbReference>
<dbReference type="InterPro" id="IPR029021">
    <property type="entry name" value="Prot-tyrosine_phosphatase-like"/>
</dbReference>
<dbReference type="InterPro" id="IPR052449">
    <property type="entry name" value="STYX-Interacting_Phosphatase"/>
</dbReference>
<dbReference type="InterPro" id="IPR000387">
    <property type="entry name" value="Tyr_Pase_dom"/>
</dbReference>
<dbReference type="InterPro" id="IPR020422">
    <property type="entry name" value="TYR_PHOSPHATASE_DUAL_dom"/>
</dbReference>
<dbReference type="PANTHER" id="PTHR46588">
    <property type="entry name" value="SERINE/THREONINE/TYROSINE-INTERACTING PROTEIN"/>
    <property type="match status" value="1"/>
</dbReference>
<dbReference type="PANTHER" id="PTHR46588:SF1">
    <property type="entry name" value="SERINE_THREONINE_TYROSINE-INTERACTING PROTEIN"/>
    <property type="match status" value="1"/>
</dbReference>
<dbReference type="Pfam" id="PF00782">
    <property type="entry name" value="DSPc"/>
    <property type="match status" value="1"/>
</dbReference>
<dbReference type="SMART" id="SM00195">
    <property type="entry name" value="DSPc"/>
    <property type="match status" value="1"/>
</dbReference>
<dbReference type="SUPFAM" id="SSF52799">
    <property type="entry name" value="(Phosphotyrosine protein) phosphatases II"/>
    <property type="match status" value="1"/>
</dbReference>
<dbReference type="PROSITE" id="PS50056">
    <property type="entry name" value="TYR_PHOSPHATASE_2"/>
    <property type="match status" value="1"/>
</dbReference>
<dbReference type="PROSITE" id="PS50054">
    <property type="entry name" value="TYR_PHOSPHATASE_DUAL"/>
    <property type="match status" value="1"/>
</dbReference>
<evidence type="ECO:0000250" key="1">
    <source>
        <dbReference type="UniProtKB" id="Q8WUJ0"/>
    </source>
</evidence>
<evidence type="ECO:0000255" key="2">
    <source>
        <dbReference type="PROSITE-ProRule" id="PRU00160"/>
    </source>
</evidence>
<evidence type="ECO:0000305" key="3"/>
<proteinExistence type="evidence at transcript level"/>
<comment type="function">
    <text evidence="1">Catalytically inactive phosphatase.</text>
</comment>
<comment type="similarity">
    <text evidence="3">Belongs to the protein-tyrosine phosphatase family. Non-receptor class subfamily.</text>
</comment>
<comment type="caution">
    <text evidence="1">Contains a Gly residue instead of a conserved Cys residue at position 120 in the dsPTPase catalytic loop which renders it catalytically inactive as a phosphatase (By similarity). The binding pocket is however sufficiently preserved to bind phosphorylated substrates, and may protect them from phosphatases (By similarity).</text>
</comment>
<organism>
    <name type="scientific">Xenopus laevis</name>
    <name type="common">African clawed frog</name>
    <dbReference type="NCBI Taxonomy" id="8355"/>
    <lineage>
        <taxon>Eukaryota</taxon>
        <taxon>Metazoa</taxon>
        <taxon>Chordata</taxon>
        <taxon>Craniata</taxon>
        <taxon>Vertebrata</taxon>
        <taxon>Euteleostomi</taxon>
        <taxon>Amphibia</taxon>
        <taxon>Batrachia</taxon>
        <taxon>Anura</taxon>
        <taxon>Pipoidea</taxon>
        <taxon>Pipidae</taxon>
        <taxon>Xenopodinae</taxon>
        <taxon>Xenopus</taxon>
        <taxon>Xenopus</taxon>
    </lineage>
</organism>
<feature type="chain" id="PRO_0000354673" description="Serine/threonine/tyrosine-interacting protein B">
    <location>
        <begin position="1"/>
        <end position="223"/>
    </location>
</feature>
<feature type="domain" description="Tyrosine-protein phosphatase" evidence="2">
    <location>
        <begin position="28"/>
        <end position="176"/>
    </location>
</feature>
<sequence>MEDVKLQFPSLPLCKEEAEDWTYPMRREMQEILPGLFLGPYSAAMKSKLSVLQKCGITHVICIRQNIEANFIKPNFQQLFRYLVLDIADNPVENIIRFFLTSKEFIDGCLQTGGKVLIHGNAGISRSAALVIAYIMETFGIKYRDAFTYVQERRFCINPNAGFVHQLQEYEAIYLAKLTIKMMSPLQLGRPLCIQSGSTGSLKRTLDDEDELGNMQVSAAHEG</sequence>